<protein>
    <recommendedName>
        <fullName evidence="1">Large ribosomal subunit protein uL16</fullName>
    </recommendedName>
    <alternativeName>
        <fullName evidence="3">50S ribosomal protein L16</fullName>
    </alternativeName>
</protein>
<feature type="chain" id="PRO_0000062045" description="Large ribosomal subunit protein uL16">
    <location>
        <begin position="1"/>
        <end position="144"/>
    </location>
</feature>
<feature type="region of interest" description="Disordered" evidence="2">
    <location>
        <begin position="1"/>
        <end position="22"/>
    </location>
</feature>
<feature type="compositionally biased region" description="Basic residues" evidence="2">
    <location>
        <begin position="1"/>
        <end position="17"/>
    </location>
</feature>
<comment type="function">
    <text evidence="1">Binds 23S rRNA and is also seen to make contacts with the A and possibly P site tRNAs.</text>
</comment>
<comment type="subunit">
    <text evidence="1">Part of the 50S ribosomal subunit.</text>
</comment>
<comment type="similarity">
    <text evidence="1">Belongs to the universal ribosomal protein uL16 family.</text>
</comment>
<gene>
    <name evidence="1" type="primary">rplP</name>
    <name type="ordered locus">BF4174</name>
</gene>
<keyword id="KW-0687">Ribonucleoprotein</keyword>
<keyword id="KW-0689">Ribosomal protein</keyword>
<keyword id="KW-0694">RNA-binding</keyword>
<keyword id="KW-0699">rRNA-binding</keyword>
<keyword id="KW-0820">tRNA-binding</keyword>
<sequence length="144" mass="16264">MLQPKKTKFRRQQKGRAKGNAQRGNQLAFGSFGIKALETKWITGRQIEAARIAVTRYMQRQGQIWIRIFPDKPITRKPADVRMGKGKGSPEGFVAPVTPGRIIIEAEGVSYEIAKEALRLAAQKLPITTKFVVRRDYDIQNQNA</sequence>
<organism>
    <name type="scientific">Bacteroides fragilis (strain YCH46)</name>
    <dbReference type="NCBI Taxonomy" id="295405"/>
    <lineage>
        <taxon>Bacteria</taxon>
        <taxon>Pseudomonadati</taxon>
        <taxon>Bacteroidota</taxon>
        <taxon>Bacteroidia</taxon>
        <taxon>Bacteroidales</taxon>
        <taxon>Bacteroidaceae</taxon>
        <taxon>Bacteroides</taxon>
    </lineage>
</organism>
<evidence type="ECO:0000255" key="1">
    <source>
        <dbReference type="HAMAP-Rule" id="MF_01342"/>
    </source>
</evidence>
<evidence type="ECO:0000256" key="2">
    <source>
        <dbReference type="SAM" id="MobiDB-lite"/>
    </source>
</evidence>
<evidence type="ECO:0000305" key="3"/>
<accession>Q64NL5</accession>
<name>RL16_BACFR</name>
<dbReference type="EMBL" id="AP006841">
    <property type="protein sequence ID" value="BAD50917.1"/>
    <property type="molecule type" value="Genomic_DNA"/>
</dbReference>
<dbReference type="RefSeq" id="WP_005791549.1">
    <property type="nucleotide sequence ID" value="NZ_UYXF01000007.1"/>
</dbReference>
<dbReference type="RefSeq" id="YP_101451.1">
    <property type="nucleotide sequence ID" value="NC_006347.1"/>
</dbReference>
<dbReference type="SMR" id="Q64NL5"/>
<dbReference type="STRING" id="295405.BF4174"/>
<dbReference type="GeneID" id="93105317"/>
<dbReference type="KEGG" id="bfr:BF4174"/>
<dbReference type="PATRIC" id="fig|295405.11.peg.4028"/>
<dbReference type="HOGENOM" id="CLU_078858_2_1_10"/>
<dbReference type="OrthoDB" id="9802589at2"/>
<dbReference type="Proteomes" id="UP000002197">
    <property type="component" value="Chromosome"/>
</dbReference>
<dbReference type="GO" id="GO:0022625">
    <property type="term" value="C:cytosolic large ribosomal subunit"/>
    <property type="evidence" value="ECO:0007669"/>
    <property type="project" value="TreeGrafter"/>
</dbReference>
<dbReference type="GO" id="GO:0019843">
    <property type="term" value="F:rRNA binding"/>
    <property type="evidence" value="ECO:0007669"/>
    <property type="project" value="UniProtKB-UniRule"/>
</dbReference>
<dbReference type="GO" id="GO:0003735">
    <property type="term" value="F:structural constituent of ribosome"/>
    <property type="evidence" value="ECO:0007669"/>
    <property type="project" value="InterPro"/>
</dbReference>
<dbReference type="GO" id="GO:0000049">
    <property type="term" value="F:tRNA binding"/>
    <property type="evidence" value="ECO:0007669"/>
    <property type="project" value="UniProtKB-KW"/>
</dbReference>
<dbReference type="GO" id="GO:0006412">
    <property type="term" value="P:translation"/>
    <property type="evidence" value="ECO:0007669"/>
    <property type="project" value="UniProtKB-UniRule"/>
</dbReference>
<dbReference type="CDD" id="cd01433">
    <property type="entry name" value="Ribosomal_L16_L10e"/>
    <property type="match status" value="1"/>
</dbReference>
<dbReference type="FunFam" id="3.90.1170.10:FF:000001">
    <property type="entry name" value="50S ribosomal protein L16"/>
    <property type="match status" value="1"/>
</dbReference>
<dbReference type="Gene3D" id="3.90.1170.10">
    <property type="entry name" value="Ribosomal protein L10e/L16"/>
    <property type="match status" value="1"/>
</dbReference>
<dbReference type="HAMAP" id="MF_01342">
    <property type="entry name" value="Ribosomal_uL16"/>
    <property type="match status" value="1"/>
</dbReference>
<dbReference type="InterPro" id="IPR047873">
    <property type="entry name" value="Ribosomal_uL16"/>
</dbReference>
<dbReference type="InterPro" id="IPR000114">
    <property type="entry name" value="Ribosomal_uL16_bact-type"/>
</dbReference>
<dbReference type="InterPro" id="IPR020798">
    <property type="entry name" value="Ribosomal_uL16_CS"/>
</dbReference>
<dbReference type="InterPro" id="IPR016180">
    <property type="entry name" value="Ribosomal_uL16_dom"/>
</dbReference>
<dbReference type="InterPro" id="IPR036920">
    <property type="entry name" value="Ribosomal_uL16_sf"/>
</dbReference>
<dbReference type="NCBIfam" id="TIGR01164">
    <property type="entry name" value="rplP_bact"/>
    <property type="match status" value="1"/>
</dbReference>
<dbReference type="PANTHER" id="PTHR12220">
    <property type="entry name" value="50S/60S RIBOSOMAL PROTEIN L16"/>
    <property type="match status" value="1"/>
</dbReference>
<dbReference type="PANTHER" id="PTHR12220:SF13">
    <property type="entry name" value="LARGE RIBOSOMAL SUBUNIT PROTEIN UL16M"/>
    <property type="match status" value="1"/>
</dbReference>
<dbReference type="Pfam" id="PF00252">
    <property type="entry name" value="Ribosomal_L16"/>
    <property type="match status" value="1"/>
</dbReference>
<dbReference type="PRINTS" id="PR00060">
    <property type="entry name" value="RIBOSOMALL16"/>
</dbReference>
<dbReference type="SUPFAM" id="SSF54686">
    <property type="entry name" value="Ribosomal protein L16p/L10e"/>
    <property type="match status" value="1"/>
</dbReference>
<dbReference type="PROSITE" id="PS00701">
    <property type="entry name" value="RIBOSOMAL_L16_2"/>
    <property type="match status" value="1"/>
</dbReference>
<reference key="1">
    <citation type="journal article" date="2004" name="Proc. Natl. Acad. Sci. U.S.A.">
        <title>Genomic analysis of Bacteroides fragilis reveals extensive DNA inversions regulating cell surface adaptation.</title>
        <authorList>
            <person name="Kuwahara T."/>
            <person name="Yamashita A."/>
            <person name="Hirakawa H."/>
            <person name="Nakayama H."/>
            <person name="Toh H."/>
            <person name="Okada N."/>
            <person name="Kuhara S."/>
            <person name="Hattori M."/>
            <person name="Hayashi T."/>
            <person name="Ohnishi Y."/>
        </authorList>
    </citation>
    <scope>NUCLEOTIDE SEQUENCE [LARGE SCALE GENOMIC DNA]</scope>
    <source>
        <strain>YCH46</strain>
    </source>
</reference>
<proteinExistence type="inferred from homology"/>